<organism>
    <name type="scientific">Bacillus cytotoxicus (strain DSM 22905 / CIP 110041 / 391-98 / NVH 391-98)</name>
    <dbReference type="NCBI Taxonomy" id="315749"/>
    <lineage>
        <taxon>Bacteria</taxon>
        <taxon>Bacillati</taxon>
        <taxon>Bacillota</taxon>
        <taxon>Bacilli</taxon>
        <taxon>Bacillales</taxon>
        <taxon>Bacillaceae</taxon>
        <taxon>Bacillus</taxon>
        <taxon>Bacillus cereus group</taxon>
    </lineage>
</organism>
<accession>A7GRE7</accession>
<gene>
    <name evidence="1" type="primary">rimP</name>
    <name type="ordered locus">Bcer98_2469</name>
</gene>
<proteinExistence type="inferred from homology"/>
<comment type="function">
    <text evidence="1">Required for maturation of 30S ribosomal subunits.</text>
</comment>
<comment type="subcellular location">
    <subcellularLocation>
        <location evidence="1">Cytoplasm</location>
    </subcellularLocation>
</comment>
<comment type="similarity">
    <text evidence="1">Belongs to the RimP family.</text>
</comment>
<reference key="1">
    <citation type="journal article" date="2008" name="Chem. Biol. Interact.">
        <title>Extending the Bacillus cereus group genomics to putative food-borne pathogens of different toxicity.</title>
        <authorList>
            <person name="Lapidus A."/>
            <person name="Goltsman E."/>
            <person name="Auger S."/>
            <person name="Galleron N."/>
            <person name="Segurens B."/>
            <person name="Dossat C."/>
            <person name="Land M.L."/>
            <person name="Broussolle V."/>
            <person name="Brillard J."/>
            <person name="Guinebretiere M.-H."/>
            <person name="Sanchis V."/>
            <person name="Nguen-the C."/>
            <person name="Lereclus D."/>
            <person name="Richardson P."/>
            <person name="Wincker P."/>
            <person name="Weissenbach J."/>
            <person name="Ehrlich S.D."/>
            <person name="Sorokin A."/>
        </authorList>
    </citation>
    <scope>NUCLEOTIDE SEQUENCE [LARGE SCALE GENOMIC DNA]</scope>
    <source>
        <strain>DSM 22905 / CIP 110041 / 391-98 / NVH 391-98</strain>
    </source>
</reference>
<protein>
    <recommendedName>
        <fullName evidence="1">Ribosome maturation factor RimP</fullName>
    </recommendedName>
</protein>
<dbReference type="EMBL" id="CP000764">
    <property type="protein sequence ID" value="ABS22705.1"/>
    <property type="molecule type" value="Genomic_DNA"/>
</dbReference>
<dbReference type="RefSeq" id="WP_012094909.1">
    <property type="nucleotide sequence ID" value="NC_009674.1"/>
</dbReference>
<dbReference type="SMR" id="A7GRE7"/>
<dbReference type="STRING" id="315749.Bcer98_2469"/>
<dbReference type="GeneID" id="33897724"/>
<dbReference type="KEGG" id="bcy:Bcer98_2469"/>
<dbReference type="eggNOG" id="COG0779">
    <property type="taxonomic scope" value="Bacteria"/>
</dbReference>
<dbReference type="HOGENOM" id="CLU_070525_2_0_9"/>
<dbReference type="OrthoDB" id="9805006at2"/>
<dbReference type="Proteomes" id="UP000002300">
    <property type="component" value="Chromosome"/>
</dbReference>
<dbReference type="GO" id="GO:0005829">
    <property type="term" value="C:cytosol"/>
    <property type="evidence" value="ECO:0007669"/>
    <property type="project" value="TreeGrafter"/>
</dbReference>
<dbReference type="GO" id="GO:0000028">
    <property type="term" value="P:ribosomal small subunit assembly"/>
    <property type="evidence" value="ECO:0007669"/>
    <property type="project" value="TreeGrafter"/>
</dbReference>
<dbReference type="GO" id="GO:0006412">
    <property type="term" value="P:translation"/>
    <property type="evidence" value="ECO:0007669"/>
    <property type="project" value="TreeGrafter"/>
</dbReference>
<dbReference type="CDD" id="cd01734">
    <property type="entry name" value="YlxS_C"/>
    <property type="match status" value="1"/>
</dbReference>
<dbReference type="FunFam" id="2.30.30.180:FF:000002">
    <property type="entry name" value="Ribosome maturation factor RimP"/>
    <property type="match status" value="1"/>
</dbReference>
<dbReference type="FunFam" id="3.30.300.70:FF:000001">
    <property type="entry name" value="Ribosome maturation factor RimP"/>
    <property type="match status" value="1"/>
</dbReference>
<dbReference type="Gene3D" id="2.30.30.180">
    <property type="entry name" value="Ribosome maturation factor RimP, C-terminal domain"/>
    <property type="match status" value="1"/>
</dbReference>
<dbReference type="Gene3D" id="3.30.300.70">
    <property type="entry name" value="RimP-like superfamily, N-terminal"/>
    <property type="match status" value="1"/>
</dbReference>
<dbReference type="HAMAP" id="MF_01077">
    <property type="entry name" value="RimP"/>
    <property type="match status" value="1"/>
</dbReference>
<dbReference type="InterPro" id="IPR003728">
    <property type="entry name" value="Ribosome_maturation_RimP"/>
</dbReference>
<dbReference type="InterPro" id="IPR028998">
    <property type="entry name" value="RimP_C"/>
</dbReference>
<dbReference type="InterPro" id="IPR036847">
    <property type="entry name" value="RimP_C_sf"/>
</dbReference>
<dbReference type="InterPro" id="IPR028989">
    <property type="entry name" value="RimP_N"/>
</dbReference>
<dbReference type="InterPro" id="IPR035956">
    <property type="entry name" value="RimP_N_sf"/>
</dbReference>
<dbReference type="NCBIfam" id="NF000928">
    <property type="entry name" value="PRK00092.1-2"/>
    <property type="match status" value="1"/>
</dbReference>
<dbReference type="PANTHER" id="PTHR33867">
    <property type="entry name" value="RIBOSOME MATURATION FACTOR RIMP"/>
    <property type="match status" value="1"/>
</dbReference>
<dbReference type="PANTHER" id="PTHR33867:SF1">
    <property type="entry name" value="RIBOSOME MATURATION FACTOR RIMP"/>
    <property type="match status" value="1"/>
</dbReference>
<dbReference type="Pfam" id="PF17384">
    <property type="entry name" value="DUF150_C"/>
    <property type="match status" value="1"/>
</dbReference>
<dbReference type="Pfam" id="PF02576">
    <property type="entry name" value="RimP_N"/>
    <property type="match status" value="1"/>
</dbReference>
<dbReference type="SUPFAM" id="SSF74942">
    <property type="entry name" value="YhbC-like, C-terminal domain"/>
    <property type="match status" value="1"/>
</dbReference>
<dbReference type="SUPFAM" id="SSF75420">
    <property type="entry name" value="YhbC-like, N-terminal domain"/>
    <property type="match status" value="1"/>
</dbReference>
<feature type="chain" id="PRO_1000084517" description="Ribosome maturation factor RimP">
    <location>
        <begin position="1"/>
        <end position="156"/>
    </location>
</feature>
<name>RIMP_BACCN</name>
<keyword id="KW-0963">Cytoplasm</keyword>
<keyword id="KW-0690">Ribosome biogenesis</keyword>
<evidence type="ECO:0000255" key="1">
    <source>
        <dbReference type="HAMAP-Rule" id="MF_01077"/>
    </source>
</evidence>
<sequence>MDKKVTEVVEALAQPIVEELNLELVDVEYVKEGKDWFLRVFIDSETGVDIEECGAVSERLSEALDKEDPIPHLYFLDVSSPGAERPLKKEKDFEQAVGSQVAIKTYEPIDGEKMFEGKLLSYDGTTITLLLTIKTRKKEIQIPMDKVANARLAVTF</sequence>